<evidence type="ECO:0000255" key="1"/>
<evidence type="ECO:0000255" key="2">
    <source>
        <dbReference type="PROSITE-ProRule" id="PRU00793"/>
    </source>
</evidence>
<evidence type="ECO:0000256" key="3">
    <source>
        <dbReference type="SAM" id="MobiDB-lite"/>
    </source>
</evidence>
<evidence type="ECO:0000269" key="4">
    <source>
    </source>
</evidence>
<evidence type="ECO:0000269" key="5">
    <source>
    </source>
</evidence>
<evidence type="ECO:0000303" key="6">
    <source ref="5"/>
</evidence>
<evidence type="ECO:0000305" key="7"/>
<accession>Q17RW2</accession>
<accession>C9J1X6</accession>
<accession>Q14BD7</accession>
<accession>Q59EX5</accession>
<accession>Q5VY50</accession>
<accession>Q7Z5L5</accession>
<gene>
    <name type="primary">COL24A1</name>
</gene>
<organism>
    <name type="scientific">Homo sapiens</name>
    <name type="common">Human</name>
    <dbReference type="NCBI Taxonomy" id="9606"/>
    <lineage>
        <taxon>Eukaryota</taxon>
        <taxon>Metazoa</taxon>
        <taxon>Chordata</taxon>
        <taxon>Craniata</taxon>
        <taxon>Vertebrata</taxon>
        <taxon>Euteleostomi</taxon>
        <taxon>Mammalia</taxon>
        <taxon>Eutheria</taxon>
        <taxon>Euarchontoglires</taxon>
        <taxon>Primates</taxon>
        <taxon>Haplorrhini</taxon>
        <taxon>Catarrhini</taxon>
        <taxon>Hominidae</taxon>
        <taxon>Homo</taxon>
    </lineage>
</organism>
<comment type="function">
    <text evidence="4">May participate in regulating type I collagen fibrillogenesis at specific anatomical locations during fetal development.</text>
</comment>
<comment type="interaction">
    <interactant intactId="EBI-2529266">
        <id>Q17RW2</id>
    </interactant>
    <interactant intactId="EBI-743771">
        <id>Q92624</id>
        <label>APPBP2</label>
    </interactant>
    <organismsDiffer>false</organismsDiffer>
    <experiments>6</experiments>
</comment>
<comment type="subcellular location">
    <subcellularLocation>
        <location evidence="2">Secreted</location>
        <location evidence="2">Extracellular space</location>
        <location evidence="2">Extracellular matrix</location>
    </subcellularLocation>
</comment>
<comment type="alternative products">
    <event type="alternative splicing"/>
    <isoform>
        <id>Q17RW2-1</id>
        <name>1</name>
        <sequence type="displayed"/>
    </isoform>
    <isoform>
        <id>Q17RW2-2</id>
        <name>2</name>
        <sequence type="described" ref="VSP_031090"/>
    </isoform>
</comment>
<comment type="similarity">
    <text evidence="2">Belongs to the fibrillar collagen family.</text>
</comment>
<feature type="signal peptide" evidence="1">
    <location>
        <begin position="1"/>
        <end position="35"/>
    </location>
</feature>
<feature type="chain" id="PRO_0000317616" description="Collagen alpha-1(XXIV) chain">
    <location>
        <begin position="36"/>
        <end position="1714"/>
    </location>
</feature>
<feature type="domain" description="Laminin G-like">
    <location>
        <begin position="141"/>
        <end position="217"/>
    </location>
</feature>
<feature type="domain" description="Collagen-like 1">
    <location>
        <begin position="487"/>
        <end position="542"/>
    </location>
</feature>
<feature type="domain" description="Collagen-like 2">
    <location>
        <begin position="552"/>
        <end position="611"/>
    </location>
</feature>
<feature type="domain" description="Collagen-like 3">
    <location>
        <begin position="660"/>
        <end position="719"/>
    </location>
</feature>
<feature type="domain" description="Collagen-like 4">
    <location>
        <begin position="741"/>
        <end position="797"/>
    </location>
</feature>
<feature type="domain" description="Collagen-like 5">
    <location>
        <begin position="798"/>
        <end position="857"/>
    </location>
</feature>
<feature type="domain" description="Collagen-like 6">
    <location>
        <begin position="858"/>
        <end position="887"/>
    </location>
</feature>
<feature type="domain" description="Collagen-like 7">
    <location>
        <begin position="888"/>
        <end position="947"/>
    </location>
</feature>
<feature type="domain" description="Collagen-like 8">
    <location>
        <begin position="948"/>
        <end position="1007"/>
    </location>
</feature>
<feature type="domain" description="Collagen-like 9">
    <location>
        <begin position="1011"/>
        <end position="1052"/>
    </location>
</feature>
<feature type="domain" description="Collagen-like 10">
    <location>
        <begin position="1053"/>
        <end position="1112"/>
    </location>
</feature>
<feature type="domain" description="Collagen-like 11">
    <location>
        <begin position="1116"/>
        <end position="1170"/>
    </location>
</feature>
<feature type="domain" description="Collagen-like 12">
    <location>
        <begin position="1172"/>
        <end position="1196"/>
    </location>
</feature>
<feature type="domain" description="Collagen-like 13">
    <location>
        <begin position="1201"/>
        <end position="1249"/>
    </location>
</feature>
<feature type="domain" description="Collagen-like 14">
    <location>
        <begin position="1252"/>
        <end position="1306"/>
    </location>
</feature>
<feature type="domain" description="Collagen-like 15">
    <location>
        <begin position="1309"/>
        <end position="1353"/>
    </location>
</feature>
<feature type="domain" description="Collagen-like 16">
    <location>
        <begin position="1354"/>
        <end position="1413"/>
    </location>
</feature>
<feature type="domain" description="Collagen-like 17">
    <location>
        <begin position="1420"/>
        <end position="1479"/>
    </location>
</feature>
<feature type="domain" description="Fibrillar collagen NC1" evidence="2">
    <location>
        <begin position="1515"/>
        <end position="1714"/>
    </location>
</feature>
<feature type="region of interest" description="Disordered" evidence="3">
    <location>
        <begin position="487"/>
        <end position="1481"/>
    </location>
</feature>
<feature type="compositionally biased region" description="Pro residues" evidence="3">
    <location>
        <begin position="496"/>
        <end position="505"/>
    </location>
</feature>
<feature type="compositionally biased region" description="Low complexity" evidence="3">
    <location>
        <begin position="574"/>
        <end position="587"/>
    </location>
</feature>
<feature type="compositionally biased region" description="Low complexity" evidence="3">
    <location>
        <begin position="685"/>
        <end position="701"/>
    </location>
</feature>
<feature type="compositionally biased region" description="Pro residues" evidence="3">
    <location>
        <begin position="893"/>
        <end position="902"/>
    </location>
</feature>
<feature type="compositionally biased region" description="Low complexity" evidence="3">
    <location>
        <begin position="985"/>
        <end position="1019"/>
    </location>
</feature>
<feature type="compositionally biased region" description="Gly residues" evidence="3">
    <location>
        <begin position="1035"/>
        <end position="1044"/>
    </location>
</feature>
<feature type="compositionally biased region" description="Gly residues" evidence="3">
    <location>
        <begin position="1065"/>
        <end position="1074"/>
    </location>
</feature>
<feature type="compositionally biased region" description="Low complexity" evidence="3">
    <location>
        <begin position="1132"/>
        <end position="1145"/>
    </location>
</feature>
<feature type="compositionally biased region" description="Low complexity" evidence="3">
    <location>
        <begin position="1174"/>
        <end position="1186"/>
    </location>
</feature>
<feature type="compositionally biased region" description="Basic and acidic residues" evidence="3">
    <location>
        <begin position="1256"/>
        <end position="1266"/>
    </location>
</feature>
<feature type="compositionally biased region" description="Low complexity" evidence="3">
    <location>
        <begin position="1271"/>
        <end position="1293"/>
    </location>
</feature>
<feature type="compositionally biased region" description="Gly residues" evidence="3">
    <location>
        <begin position="1318"/>
        <end position="1327"/>
    </location>
</feature>
<feature type="compositionally biased region" description="Pro residues" evidence="3">
    <location>
        <begin position="1466"/>
        <end position="1476"/>
    </location>
</feature>
<feature type="glycosylation site" description="N-linked (GlcNAc...) asparagine" evidence="1">
    <location>
        <position position="155"/>
    </location>
</feature>
<feature type="glycosylation site" description="N-linked (GlcNAc...) asparagine" evidence="1">
    <location>
        <position position="321"/>
    </location>
</feature>
<feature type="glycosylation site" description="N-linked (GlcNAc...) asparagine" evidence="1">
    <location>
        <position position="376"/>
    </location>
</feature>
<feature type="splice variant" id="VSP_031090" description="In isoform 2." evidence="6">
    <location>
        <begin position="1459"/>
        <end position="1479"/>
    </location>
</feature>
<feature type="sequence variant" id="VAR_062865" description="In dbSNP:rs11161747." evidence="4 5">
    <original>A</original>
    <variation>V</variation>
    <location>
        <position position="61"/>
    </location>
</feature>
<feature type="sequence variant" id="VAR_055672" description="In dbSNP:rs1027819.">
    <original>P</original>
    <variation>L</variation>
    <location>
        <position position="151"/>
    </location>
</feature>
<feature type="sequence variant" id="VAR_055673" description="In dbSNP:rs17128866.">
    <original>I</original>
    <variation>T</variation>
    <location>
        <position position="293"/>
    </location>
</feature>
<feature type="sequence variant" id="VAR_055674" description="In dbSNP:rs10493784.">
    <original>M</original>
    <variation>L</variation>
    <location>
        <position position="481"/>
    </location>
</feature>
<feature type="sequence variant" id="VAR_055675" description="In dbSNP:rs11161732." evidence="4">
    <original>P</original>
    <variation>S</variation>
    <location>
        <position position="546"/>
    </location>
</feature>
<feature type="sequence variant" id="VAR_061116" description="In dbSNP:rs60891279.">
    <original>R</original>
    <variation>H</variation>
    <location>
        <position position="641"/>
    </location>
</feature>
<feature type="sequence variant" id="VAR_055676" description="In dbSNP:rs641712." evidence="4">
    <original>P</original>
    <variation>S</variation>
    <location>
        <position position="731"/>
    </location>
</feature>
<feature type="sequence variant" id="VAR_038565" description="In dbSNP:rs7520146.">
    <original>G</original>
    <variation>R</variation>
    <location>
        <position position="1423"/>
    </location>
</feature>
<feature type="sequence conflict" description="In Ref. 5; BAD92923." evidence="7" ref="5">
    <original>GYAGEPGPEGLKGEVGDQGNIG</original>
    <variation>ITVFATLYSFLTGRSRRSRKYW</variation>
    <location>
        <begin position="828"/>
        <end position="849"/>
    </location>
</feature>
<dbReference type="EMBL" id="AY244357">
    <property type="protein sequence ID" value="AAP80185.1"/>
    <property type="molecule type" value="mRNA"/>
</dbReference>
<dbReference type="EMBL" id="AC099561">
    <property type="status" value="NOT_ANNOTATED_CDS"/>
    <property type="molecule type" value="Genomic_DNA"/>
</dbReference>
<dbReference type="EMBL" id="AC104455">
    <property type="status" value="NOT_ANNOTATED_CDS"/>
    <property type="molecule type" value="Genomic_DNA"/>
</dbReference>
<dbReference type="EMBL" id="AL356059">
    <property type="status" value="NOT_ANNOTATED_CDS"/>
    <property type="molecule type" value="Genomic_DNA"/>
</dbReference>
<dbReference type="EMBL" id="AL359971">
    <property type="status" value="NOT_ANNOTATED_CDS"/>
    <property type="molecule type" value="Genomic_DNA"/>
</dbReference>
<dbReference type="EMBL" id="AL445427">
    <property type="status" value="NOT_ANNOTATED_CDS"/>
    <property type="molecule type" value="Genomic_DNA"/>
</dbReference>
<dbReference type="EMBL" id="CH471097">
    <property type="protein sequence ID" value="EAW73193.1"/>
    <property type="molecule type" value="Genomic_DNA"/>
</dbReference>
<dbReference type="EMBL" id="BC113654">
    <property type="protein sequence ID" value="AAI13655.1"/>
    <property type="molecule type" value="mRNA"/>
</dbReference>
<dbReference type="EMBL" id="BC117170">
    <property type="protein sequence ID" value="AAI17171.1"/>
    <property type="molecule type" value="mRNA"/>
</dbReference>
<dbReference type="EMBL" id="AB209686">
    <property type="protein sequence ID" value="BAD92923.1"/>
    <property type="molecule type" value="mRNA"/>
</dbReference>
<dbReference type="CCDS" id="CCDS41353.1">
    <molecule id="Q17RW2-1"/>
</dbReference>
<dbReference type="RefSeq" id="NP_690850.2">
    <molecule id="Q17RW2-1"/>
    <property type="nucleotide sequence ID" value="NM_152890.7"/>
</dbReference>
<dbReference type="RefSeq" id="XP_047272957.1">
    <molecule id="Q17RW2-1"/>
    <property type="nucleotide sequence ID" value="XM_047417001.1"/>
</dbReference>
<dbReference type="RefSeq" id="XP_047272960.1">
    <molecule id="Q17RW2-1"/>
    <property type="nucleotide sequence ID" value="XM_047417004.1"/>
</dbReference>
<dbReference type="RefSeq" id="XP_047272961.1">
    <molecule id="Q17RW2-1"/>
    <property type="nucleotide sequence ID" value="XM_047417005.1"/>
</dbReference>
<dbReference type="SMR" id="Q17RW2"/>
<dbReference type="BioGRID" id="129112">
    <property type="interactions" value="5"/>
</dbReference>
<dbReference type="ComplexPortal" id="CPX-1765">
    <property type="entry name" value="Collagen type XXIV trimer"/>
</dbReference>
<dbReference type="FunCoup" id="Q17RW2">
    <property type="interactions" value="183"/>
</dbReference>
<dbReference type="IntAct" id="Q17RW2">
    <property type="interactions" value="4"/>
</dbReference>
<dbReference type="MINT" id="Q17RW2"/>
<dbReference type="STRING" id="9606.ENSP00000359603"/>
<dbReference type="ChEMBL" id="CHEMBL2364188"/>
<dbReference type="GlyCosmos" id="Q17RW2">
    <property type="glycosylation" value="3 sites, No reported glycans"/>
</dbReference>
<dbReference type="GlyGen" id="Q17RW2">
    <property type="glycosylation" value="7 sites, 2 N-linked glycans (3 sites), 1 O-linked glycan (1 site)"/>
</dbReference>
<dbReference type="iPTMnet" id="Q17RW2"/>
<dbReference type="PhosphoSitePlus" id="Q17RW2"/>
<dbReference type="BioMuta" id="COL24A1"/>
<dbReference type="DMDM" id="290457636"/>
<dbReference type="jPOST" id="Q17RW2"/>
<dbReference type="MassIVE" id="Q17RW2"/>
<dbReference type="PaxDb" id="9606-ENSP00000359603"/>
<dbReference type="PeptideAtlas" id="Q17RW2"/>
<dbReference type="ProteomicsDB" id="61168">
    <molecule id="Q17RW2-1"/>
</dbReference>
<dbReference type="ProteomicsDB" id="61169">
    <molecule id="Q17RW2-2"/>
</dbReference>
<dbReference type="Antibodypedia" id="33574">
    <property type="antibodies" value="29 antibodies from 9 providers"/>
</dbReference>
<dbReference type="DNASU" id="255631"/>
<dbReference type="Ensembl" id="ENST00000370571.7">
    <molecule id="Q17RW2-1"/>
    <property type="protein sequence ID" value="ENSP00000359603.2"/>
    <property type="gene ID" value="ENSG00000171502.15"/>
</dbReference>
<dbReference type="GeneID" id="255631"/>
<dbReference type="KEGG" id="hsa:255631"/>
<dbReference type="MANE-Select" id="ENST00000370571.7">
    <property type="protein sequence ID" value="ENSP00000359603.2"/>
    <property type="RefSeq nucleotide sequence ID" value="NM_152890.7"/>
    <property type="RefSeq protein sequence ID" value="NP_690850.2"/>
</dbReference>
<dbReference type="UCSC" id="uc001dlj.4">
    <molecule id="Q17RW2-1"/>
    <property type="organism name" value="human"/>
</dbReference>
<dbReference type="AGR" id="HGNC:20821"/>
<dbReference type="CTD" id="255631"/>
<dbReference type="DisGeNET" id="255631"/>
<dbReference type="GeneCards" id="COL24A1"/>
<dbReference type="HGNC" id="HGNC:20821">
    <property type="gene designation" value="COL24A1"/>
</dbReference>
<dbReference type="HPA" id="ENSG00000171502">
    <property type="expression patterns" value="Tissue enhanced (cervix, intestine)"/>
</dbReference>
<dbReference type="MIM" id="610025">
    <property type="type" value="gene"/>
</dbReference>
<dbReference type="neXtProt" id="NX_Q17RW2"/>
<dbReference type="OpenTargets" id="ENSG00000171502"/>
<dbReference type="PharmGKB" id="PA134932695"/>
<dbReference type="VEuPathDB" id="HostDB:ENSG00000171502"/>
<dbReference type="eggNOG" id="KOG3544">
    <property type="taxonomic scope" value="Eukaryota"/>
</dbReference>
<dbReference type="GeneTree" id="ENSGT00940000162448"/>
<dbReference type="HOGENOM" id="CLU_001074_2_1_1"/>
<dbReference type="InParanoid" id="Q17RW2"/>
<dbReference type="OMA" id="IQGKRGH"/>
<dbReference type="OrthoDB" id="8939548at2759"/>
<dbReference type="PAN-GO" id="Q17RW2">
    <property type="GO annotations" value="4 GO annotations based on evolutionary models"/>
</dbReference>
<dbReference type="PhylomeDB" id="Q17RW2"/>
<dbReference type="TreeFam" id="TF344135"/>
<dbReference type="PathwayCommons" id="Q17RW2"/>
<dbReference type="Reactome" id="R-HSA-1650814">
    <property type="pathway name" value="Collagen biosynthesis and modifying enzymes"/>
</dbReference>
<dbReference type="Reactome" id="R-HSA-2022090">
    <property type="pathway name" value="Assembly of collagen fibrils and other multimeric structures"/>
</dbReference>
<dbReference type="Reactome" id="R-HSA-8874081">
    <property type="pathway name" value="MET activates PTK2 signaling"/>
</dbReference>
<dbReference type="Reactome" id="R-HSA-8948216">
    <property type="pathway name" value="Collagen chain trimerization"/>
</dbReference>
<dbReference type="SignaLink" id="Q17RW2"/>
<dbReference type="BioGRID-ORCS" id="255631">
    <property type="hits" value="11 hits in 1141 CRISPR screens"/>
</dbReference>
<dbReference type="ChiTaRS" id="COL24A1">
    <property type="organism name" value="human"/>
</dbReference>
<dbReference type="GenomeRNAi" id="255631"/>
<dbReference type="Pharos" id="Q17RW2">
    <property type="development level" value="Tbio"/>
</dbReference>
<dbReference type="PRO" id="PR:Q17RW2"/>
<dbReference type="Proteomes" id="UP000005640">
    <property type="component" value="Chromosome 1"/>
</dbReference>
<dbReference type="RNAct" id="Q17RW2">
    <property type="molecule type" value="protein"/>
</dbReference>
<dbReference type="Bgee" id="ENSG00000171502">
    <property type="expression patterns" value="Expressed in Brodmann (1909) area 23 and 109 other cell types or tissues"/>
</dbReference>
<dbReference type="ExpressionAtlas" id="Q17RW2">
    <property type="expression patterns" value="baseline and differential"/>
</dbReference>
<dbReference type="GO" id="GO:0005604">
    <property type="term" value="C:basement membrane"/>
    <property type="evidence" value="ECO:0000318"/>
    <property type="project" value="GO_Central"/>
</dbReference>
<dbReference type="GO" id="GO:0005581">
    <property type="term" value="C:collagen trimer"/>
    <property type="evidence" value="ECO:0007669"/>
    <property type="project" value="UniProtKB-KW"/>
</dbReference>
<dbReference type="GO" id="GO:0062023">
    <property type="term" value="C:collagen-containing extracellular matrix"/>
    <property type="evidence" value="ECO:0007005"/>
    <property type="project" value="BHF-UCL"/>
</dbReference>
<dbReference type="GO" id="GO:0005788">
    <property type="term" value="C:endoplasmic reticulum lumen"/>
    <property type="evidence" value="ECO:0000304"/>
    <property type="project" value="Reactome"/>
</dbReference>
<dbReference type="GO" id="GO:0005576">
    <property type="term" value="C:extracellular region"/>
    <property type="evidence" value="ECO:0000304"/>
    <property type="project" value="Reactome"/>
</dbReference>
<dbReference type="GO" id="GO:0005615">
    <property type="term" value="C:extracellular space"/>
    <property type="evidence" value="ECO:0000318"/>
    <property type="project" value="GO_Central"/>
</dbReference>
<dbReference type="GO" id="GO:0030020">
    <property type="term" value="F:extracellular matrix structural constituent conferring tensile strength"/>
    <property type="evidence" value="ECO:0000318"/>
    <property type="project" value="GO_Central"/>
</dbReference>
<dbReference type="FunFam" id="2.60.120.1000:FF:000008">
    <property type="entry name" value="collagen alpha-1(XXIV) chain isoform X1"/>
    <property type="match status" value="1"/>
</dbReference>
<dbReference type="FunFam" id="2.60.120.1000:FF:000003">
    <property type="entry name" value="Collagen alpha-1(XXVII) chain B"/>
    <property type="match status" value="1"/>
</dbReference>
<dbReference type="FunFam" id="2.60.120.200:FF:000085">
    <property type="entry name" value="collagen alpha-1(XXVII) chain isoform X1"/>
    <property type="match status" value="1"/>
</dbReference>
<dbReference type="Gene3D" id="2.60.120.1000">
    <property type="match status" value="2"/>
</dbReference>
<dbReference type="Gene3D" id="2.60.120.200">
    <property type="match status" value="1"/>
</dbReference>
<dbReference type="InterPro" id="IPR008160">
    <property type="entry name" value="Collagen"/>
</dbReference>
<dbReference type="InterPro" id="IPR050149">
    <property type="entry name" value="Collagen_superfamily"/>
</dbReference>
<dbReference type="InterPro" id="IPR013320">
    <property type="entry name" value="ConA-like_dom_sf"/>
</dbReference>
<dbReference type="InterPro" id="IPR000885">
    <property type="entry name" value="Fib_collagen_C"/>
</dbReference>
<dbReference type="InterPro" id="IPR048287">
    <property type="entry name" value="TSPN-like_N"/>
</dbReference>
<dbReference type="PANTHER" id="PTHR24023">
    <property type="entry name" value="COLLAGEN ALPHA"/>
    <property type="match status" value="1"/>
</dbReference>
<dbReference type="PANTHER" id="PTHR24023:SF1082">
    <property type="entry name" value="COLLAGEN TRIPLE HELIX REPEAT"/>
    <property type="match status" value="1"/>
</dbReference>
<dbReference type="Pfam" id="PF01410">
    <property type="entry name" value="COLFI"/>
    <property type="match status" value="2"/>
</dbReference>
<dbReference type="Pfam" id="PF01391">
    <property type="entry name" value="Collagen"/>
    <property type="match status" value="9"/>
</dbReference>
<dbReference type="SMART" id="SM00038">
    <property type="entry name" value="COLFI"/>
    <property type="match status" value="1"/>
</dbReference>
<dbReference type="SMART" id="SM00210">
    <property type="entry name" value="TSPN"/>
    <property type="match status" value="1"/>
</dbReference>
<dbReference type="SUPFAM" id="SSF49899">
    <property type="entry name" value="Concanavalin A-like lectins/glucanases"/>
    <property type="match status" value="1"/>
</dbReference>
<dbReference type="PROSITE" id="PS51461">
    <property type="entry name" value="NC1_FIB"/>
    <property type="match status" value="1"/>
</dbReference>
<protein>
    <recommendedName>
        <fullName>Collagen alpha-1(XXIV) chain</fullName>
    </recommendedName>
</protein>
<sequence length="1714" mass="175496">MHLRAHRTRRGKVSPTAKTKSLLHFIVLCVAGVVVHAQEQGIDILHQLGLGGKDVRHSSPATAVPSASTPLPQGVHLTESGVIFKNDAYIETPFVKILPVNLGQPFTILTGLQSHRVNNAFLFSIRNKNRLQLGVQLLPKKLVVHIRGKQPAVFNYSVHDEQWHSFAITIRNQSVSMFVECGKKYFSTETIPEVQTFDSNSVFTLGSMNNNSIHFEGIVCQLDIIPSAEASADYCRYVKQQCRQADKYQPETSIPCTTLIPTKIPEHSPPPKLFAEKVLSEDTFTEGKSIPNIIKNDSETVYKRQEHQISRSQLSSLQSGNVSAVDLTNHGIQAKEMITEEDTQTNFSLSVTTHRISEAKMNTKEKFSSLLNMSDNITQHDDRVTGLSLFKKMPSILPQIKQDTITNLKKAITANLHTNELMEMQPILNTSLHRVTNEPSVDNHLDLRKEGEFYPDATYPIENSYETELYDYYYYEDLNTMLEMEYLRGPKGDTGPPGPPGPAGIPGPSGKRGPRGIPGPHGNPGLPGLPGPKGPKGDPGFSPGQPVPGEKGDQGLSGLMGPPGMQGDKGLKGHPGLPGLPGEQGIPGFAGNIGSPGYPGRQGLAGPEGNPGPKGAQGFIGSPGEAGQLGPEGERGIPGIRGKKGFKGRQGFPGDFGDRGPAGLDGSPGLVGGTGPPGFPGLRGSVGPVGPIGPAGIPGPMGLSGNKGLPGIKGDKGEQGTAGELGEPGYPGDKGAVGLPGPPGMRGKSGPSGQTGDPGLQGPSGPPGPEGFPGDIGIPGQNGPEGPKGLLGNRGPPGPPGLKGTQGEEGPIGAFGELGPRGKPGQKGYAGEPGPEGLKGEVGDQGNIGKIGETGPVGLPGEVGMTGSIGEKGERGSPGPLGPQGEKGVMGYPGPPGVPGPIGPLGLPGHVGARGPPGSQGPKGQRGSRGPDGLLGEQGIQGAKGEKGDQGKRGPHGLIGKTGNPGERGFQGKPGLQGLPGSTGDRGLPGEPGLRGLQGDVGPPGEMGMEGPPGTEGESGLQGEPGAKGDVGTAGSVGGTGEPGLRGEPGAPGEEGLQGKDGLKGVPGGRGLPGEDGEKGEMGLPGIIGPLGRSGQTGLPGPEGIVGIPGQRGRPGKKGDKGQIGPTGEVGSRGPPGKIGKSGPKGARGTRGAVGHLGLMGPDGEPGIPGYRGHQGQPGPSGLPGPKGEKGYPGEDSTVLGPPGPRGEPGPVGDQGERGEPGAEGYKGHVGVPGLRGATGQQGPPGEPGDQGEQGLKGERGSEGNKGKKGAPGPSGKPGIPGLQGLLGPKGIQGYHGADGISGNPGKIGPPGKQGLPGIRGGPGRTGLAGAPGPPGVKGSSGLPGSPGIQGPKGEQGLPGQPGIQGKRGHRGAQGDQGPCGDPGLKGQPGEYGVQGLTGFQGFPGPKGPEGDAGIVGISGPKGPIGHRGNTGPLGREGIIGPTGRTGPRGEKGFRGETGPQGPRGQPGPPGPPGAPGPRKQMDINAAIQALIESNTALQMESYQNTEVTLIDHSEEIFKTLNYLSNLLHSIKNPLGTRDNPARICKDLLNCEQKVSDGKYWIDPNLGCPSDAIEVFCNFSAGGQTCLPPVSVTKLEFGVGKVQMNFLHLLSSEATHIITIHCLNTPRWTSTQTSGPGLPIGFKGWNGQIFKVNTLLEPKVLSDDCKIQDGSWHKATFLFHTQEPNQLPVIEVQKLPHLKTERKYYIDSSSVCFL</sequence>
<reference key="1">
    <citation type="journal article" date="2003" name="J. Biol. Chem.">
        <title>Collagen XXIV, a vertebrate fibrillar collagen with structural features of invertebrate collagens: selective expression in developing cornea and bone.</title>
        <authorList>
            <person name="Koch M."/>
            <person name="Laub F."/>
            <person name="Zhou P."/>
            <person name="Hahn R.A."/>
            <person name="Tanaka S."/>
            <person name="Burgeson R.E."/>
            <person name="Gerecke D.R."/>
            <person name="Ramirez F."/>
            <person name="Gordon M.K."/>
        </authorList>
    </citation>
    <scope>NUCLEOTIDE SEQUENCE [MRNA] (ISOFORM 1)</scope>
    <scope>FUNCTION</scope>
    <scope>VARIANTS VAL-61; SER-546 AND SER-731</scope>
    <source>
        <tissue>Cartilage</tissue>
    </source>
</reference>
<reference key="2">
    <citation type="journal article" date="2006" name="Nature">
        <title>The DNA sequence and biological annotation of human chromosome 1.</title>
        <authorList>
            <person name="Gregory S.G."/>
            <person name="Barlow K.F."/>
            <person name="McLay K.E."/>
            <person name="Kaul R."/>
            <person name="Swarbreck D."/>
            <person name="Dunham A."/>
            <person name="Scott C.E."/>
            <person name="Howe K.L."/>
            <person name="Woodfine K."/>
            <person name="Spencer C.C.A."/>
            <person name="Jones M.C."/>
            <person name="Gillson C."/>
            <person name="Searle S."/>
            <person name="Zhou Y."/>
            <person name="Kokocinski F."/>
            <person name="McDonald L."/>
            <person name="Evans R."/>
            <person name="Phillips K."/>
            <person name="Atkinson A."/>
            <person name="Cooper R."/>
            <person name="Jones C."/>
            <person name="Hall R.E."/>
            <person name="Andrews T.D."/>
            <person name="Lloyd C."/>
            <person name="Ainscough R."/>
            <person name="Almeida J.P."/>
            <person name="Ambrose K.D."/>
            <person name="Anderson F."/>
            <person name="Andrew R.W."/>
            <person name="Ashwell R.I.S."/>
            <person name="Aubin K."/>
            <person name="Babbage A.K."/>
            <person name="Bagguley C.L."/>
            <person name="Bailey J."/>
            <person name="Beasley H."/>
            <person name="Bethel G."/>
            <person name="Bird C.P."/>
            <person name="Bray-Allen S."/>
            <person name="Brown J.Y."/>
            <person name="Brown A.J."/>
            <person name="Buckley D."/>
            <person name="Burton J."/>
            <person name="Bye J."/>
            <person name="Carder C."/>
            <person name="Chapman J.C."/>
            <person name="Clark S.Y."/>
            <person name="Clarke G."/>
            <person name="Clee C."/>
            <person name="Cobley V."/>
            <person name="Collier R.E."/>
            <person name="Corby N."/>
            <person name="Coville G.J."/>
            <person name="Davies J."/>
            <person name="Deadman R."/>
            <person name="Dunn M."/>
            <person name="Earthrowl M."/>
            <person name="Ellington A.G."/>
            <person name="Errington H."/>
            <person name="Frankish A."/>
            <person name="Frankland J."/>
            <person name="French L."/>
            <person name="Garner P."/>
            <person name="Garnett J."/>
            <person name="Gay L."/>
            <person name="Ghori M.R.J."/>
            <person name="Gibson R."/>
            <person name="Gilby L.M."/>
            <person name="Gillett W."/>
            <person name="Glithero R.J."/>
            <person name="Grafham D.V."/>
            <person name="Griffiths C."/>
            <person name="Griffiths-Jones S."/>
            <person name="Grocock R."/>
            <person name="Hammond S."/>
            <person name="Harrison E.S.I."/>
            <person name="Hart E."/>
            <person name="Haugen E."/>
            <person name="Heath P.D."/>
            <person name="Holmes S."/>
            <person name="Holt K."/>
            <person name="Howden P.J."/>
            <person name="Hunt A.R."/>
            <person name="Hunt S.E."/>
            <person name="Hunter G."/>
            <person name="Isherwood J."/>
            <person name="James R."/>
            <person name="Johnson C."/>
            <person name="Johnson D."/>
            <person name="Joy A."/>
            <person name="Kay M."/>
            <person name="Kershaw J.K."/>
            <person name="Kibukawa M."/>
            <person name="Kimberley A.M."/>
            <person name="King A."/>
            <person name="Knights A.J."/>
            <person name="Lad H."/>
            <person name="Laird G."/>
            <person name="Lawlor S."/>
            <person name="Leongamornlert D.A."/>
            <person name="Lloyd D.M."/>
            <person name="Loveland J."/>
            <person name="Lovell J."/>
            <person name="Lush M.J."/>
            <person name="Lyne R."/>
            <person name="Martin S."/>
            <person name="Mashreghi-Mohammadi M."/>
            <person name="Matthews L."/>
            <person name="Matthews N.S.W."/>
            <person name="McLaren S."/>
            <person name="Milne S."/>
            <person name="Mistry S."/>
            <person name="Moore M.J.F."/>
            <person name="Nickerson T."/>
            <person name="O'Dell C.N."/>
            <person name="Oliver K."/>
            <person name="Palmeiri A."/>
            <person name="Palmer S.A."/>
            <person name="Parker A."/>
            <person name="Patel D."/>
            <person name="Pearce A.V."/>
            <person name="Peck A.I."/>
            <person name="Pelan S."/>
            <person name="Phelps K."/>
            <person name="Phillimore B.J."/>
            <person name="Plumb R."/>
            <person name="Rajan J."/>
            <person name="Raymond C."/>
            <person name="Rouse G."/>
            <person name="Saenphimmachak C."/>
            <person name="Sehra H.K."/>
            <person name="Sheridan E."/>
            <person name="Shownkeen R."/>
            <person name="Sims S."/>
            <person name="Skuce C.D."/>
            <person name="Smith M."/>
            <person name="Steward C."/>
            <person name="Subramanian S."/>
            <person name="Sycamore N."/>
            <person name="Tracey A."/>
            <person name="Tromans A."/>
            <person name="Van Helmond Z."/>
            <person name="Wall M."/>
            <person name="Wallis J.M."/>
            <person name="White S."/>
            <person name="Whitehead S.L."/>
            <person name="Wilkinson J.E."/>
            <person name="Willey D.L."/>
            <person name="Williams H."/>
            <person name="Wilming L."/>
            <person name="Wray P.W."/>
            <person name="Wu Z."/>
            <person name="Coulson A."/>
            <person name="Vaudin M."/>
            <person name="Sulston J.E."/>
            <person name="Durbin R.M."/>
            <person name="Hubbard T."/>
            <person name="Wooster R."/>
            <person name="Dunham I."/>
            <person name="Carter N.P."/>
            <person name="McVean G."/>
            <person name="Ross M.T."/>
            <person name="Harrow J."/>
            <person name="Olson M.V."/>
            <person name="Beck S."/>
            <person name="Rogers J."/>
            <person name="Bentley D.R."/>
        </authorList>
    </citation>
    <scope>NUCLEOTIDE SEQUENCE [LARGE SCALE GENOMIC DNA]</scope>
</reference>
<reference key="3">
    <citation type="submission" date="2005-09" db="EMBL/GenBank/DDBJ databases">
        <authorList>
            <person name="Mural R.J."/>
            <person name="Istrail S."/>
            <person name="Sutton G.G."/>
            <person name="Florea L."/>
            <person name="Halpern A.L."/>
            <person name="Mobarry C.M."/>
            <person name="Lippert R."/>
            <person name="Walenz B."/>
            <person name="Shatkay H."/>
            <person name="Dew I."/>
            <person name="Miller J.R."/>
            <person name="Flanigan M.J."/>
            <person name="Edwards N.J."/>
            <person name="Bolanos R."/>
            <person name="Fasulo D."/>
            <person name="Halldorsson B.V."/>
            <person name="Hannenhalli S."/>
            <person name="Turner R."/>
            <person name="Yooseph S."/>
            <person name="Lu F."/>
            <person name="Nusskern D.R."/>
            <person name="Shue B.C."/>
            <person name="Zheng X.H."/>
            <person name="Zhong F."/>
            <person name="Delcher A.L."/>
            <person name="Huson D.H."/>
            <person name="Kravitz S.A."/>
            <person name="Mouchard L."/>
            <person name="Reinert K."/>
            <person name="Remington K.A."/>
            <person name="Clark A.G."/>
            <person name="Waterman M.S."/>
            <person name="Eichler E.E."/>
            <person name="Adams M.D."/>
            <person name="Hunkapiller M.W."/>
            <person name="Myers E.W."/>
            <person name="Venter J.C."/>
        </authorList>
    </citation>
    <scope>NUCLEOTIDE SEQUENCE [LARGE SCALE GENOMIC DNA]</scope>
</reference>
<reference key="4">
    <citation type="journal article" date="2004" name="Genome Res.">
        <title>The status, quality, and expansion of the NIH full-length cDNA project: the Mammalian Gene Collection (MGC).</title>
        <authorList>
            <consortium name="The MGC Project Team"/>
        </authorList>
    </citation>
    <scope>NUCLEOTIDE SEQUENCE [LARGE SCALE MRNA] (ISOFORM 1)</scope>
    <scope>VARIANT VAL-61</scope>
</reference>
<reference key="5">
    <citation type="submission" date="2005-03" db="EMBL/GenBank/DDBJ databases">
        <authorList>
            <person name="Totoki Y."/>
            <person name="Toyoda A."/>
            <person name="Takeda T."/>
            <person name="Sakaki Y."/>
            <person name="Tanaka A."/>
            <person name="Yokoyama S."/>
            <person name="Ohara O."/>
            <person name="Nagase T."/>
            <person name="Kikuno R.F."/>
        </authorList>
    </citation>
    <scope>NUCLEOTIDE SEQUENCE [LARGE SCALE MRNA] OF 827-1714 (ISOFORM 2)</scope>
    <source>
        <tissue>Brain</tissue>
    </source>
</reference>
<proteinExistence type="evidence at protein level"/>
<keyword id="KW-0025">Alternative splicing</keyword>
<keyword id="KW-0176">Collagen</keyword>
<keyword id="KW-0272">Extracellular matrix</keyword>
<keyword id="KW-0325">Glycoprotein</keyword>
<keyword id="KW-1267">Proteomics identification</keyword>
<keyword id="KW-1185">Reference proteome</keyword>
<keyword id="KW-0677">Repeat</keyword>
<keyword id="KW-0964">Secreted</keyword>
<keyword id="KW-0732">Signal</keyword>
<name>COOA1_HUMAN</name>